<sequence>MRRADGQPVTVLVVDDEPVLAEMVSMALRYEGWNITTAGDGSSAIAAARRQRPDVVVLDVMLPDMSGLDVLHKLRSENPGLPVLLLTAKDAVEDRIAGLTAGGDDYVTKPFSIEEVVLRLRALLRRTGVTTVDSGAQLVVGDLVLDEDSHEVMRAGEPVSLTSTEFELLRFMMHNSKRVLSKAQILDRVWSYDFGGRSNIVELYISYLRKKIDNGREPMIHTLRGAGYVLKPAR</sequence>
<accession>O69730</accession>
<accession>L0TF65</accession>
<accession>Q50808</accession>
<evidence type="ECO:0000255" key="1">
    <source>
        <dbReference type="PROSITE-ProRule" id="PRU00169"/>
    </source>
</evidence>
<evidence type="ECO:0000255" key="2">
    <source>
        <dbReference type="PROSITE-ProRule" id="PRU01091"/>
    </source>
</evidence>
<evidence type="ECO:0000269" key="3">
    <source>
    </source>
</evidence>
<evidence type="ECO:0000269" key="4">
    <source>
    </source>
</evidence>
<evidence type="ECO:0000305" key="5"/>
<gene>
    <name type="primary">tcrX</name>
    <name type="ordered locus">Rv3765c</name>
</gene>
<keyword id="KW-0963">Cytoplasm</keyword>
<keyword id="KW-0238">DNA-binding</keyword>
<keyword id="KW-0597">Phosphoprotein</keyword>
<keyword id="KW-1185">Reference proteome</keyword>
<keyword id="KW-0804">Transcription</keyword>
<keyword id="KW-0805">Transcription regulation</keyword>
<keyword id="KW-0902">Two-component regulatory system</keyword>
<organism>
    <name type="scientific">Mycobacterium tuberculosis (strain ATCC 25618 / H37Rv)</name>
    <dbReference type="NCBI Taxonomy" id="83332"/>
    <lineage>
        <taxon>Bacteria</taxon>
        <taxon>Bacillati</taxon>
        <taxon>Actinomycetota</taxon>
        <taxon>Actinomycetes</taxon>
        <taxon>Mycobacteriales</taxon>
        <taxon>Mycobacteriaceae</taxon>
        <taxon>Mycobacterium</taxon>
        <taxon>Mycobacterium tuberculosis complex</taxon>
    </lineage>
</organism>
<proteinExistence type="evidence at protein level"/>
<dbReference type="EMBL" id="X99370">
    <property type="protein sequence ID" value="CAA67749.1"/>
    <property type="molecule type" value="Genomic_DNA"/>
</dbReference>
<dbReference type="EMBL" id="AL123456">
    <property type="protein sequence ID" value="CCP46592.1"/>
    <property type="molecule type" value="Genomic_DNA"/>
</dbReference>
<dbReference type="PIR" id="F70801">
    <property type="entry name" value="F70801"/>
</dbReference>
<dbReference type="RefSeq" id="NP_218282.1">
    <property type="nucleotide sequence ID" value="NC_000962.3"/>
</dbReference>
<dbReference type="RefSeq" id="WP_003420552.1">
    <property type="nucleotide sequence ID" value="NZ_NVQJ01000009.1"/>
</dbReference>
<dbReference type="SMR" id="O69730"/>
<dbReference type="FunCoup" id="O69730">
    <property type="interactions" value="11"/>
</dbReference>
<dbReference type="STRING" id="83332.Rv3765c"/>
<dbReference type="PaxDb" id="83332-Rv3765c"/>
<dbReference type="DNASU" id="886100"/>
<dbReference type="GeneID" id="45427765"/>
<dbReference type="GeneID" id="886100"/>
<dbReference type="KEGG" id="mtu:Rv3765c"/>
<dbReference type="KEGG" id="mtv:RVBD_3765c"/>
<dbReference type="TubercuList" id="Rv3765c"/>
<dbReference type="eggNOG" id="COG0745">
    <property type="taxonomic scope" value="Bacteria"/>
</dbReference>
<dbReference type="InParanoid" id="O69730"/>
<dbReference type="OrthoDB" id="4760923at2"/>
<dbReference type="PhylomeDB" id="O69730"/>
<dbReference type="SABIO-RK" id="O69730"/>
<dbReference type="PHI-base" id="PHI:3615"/>
<dbReference type="Proteomes" id="UP000001584">
    <property type="component" value="Chromosome"/>
</dbReference>
<dbReference type="GO" id="GO:0005829">
    <property type="term" value="C:cytosol"/>
    <property type="evidence" value="ECO:0000318"/>
    <property type="project" value="GO_Central"/>
</dbReference>
<dbReference type="GO" id="GO:0032993">
    <property type="term" value="C:protein-DNA complex"/>
    <property type="evidence" value="ECO:0000318"/>
    <property type="project" value="GO_Central"/>
</dbReference>
<dbReference type="GO" id="GO:0000156">
    <property type="term" value="F:phosphorelay response regulator activity"/>
    <property type="evidence" value="ECO:0000318"/>
    <property type="project" value="GO_Central"/>
</dbReference>
<dbReference type="GO" id="GO:0000976">
    <property type="term" value="F:transcription cis-regulatory region binding"/>
    <property type="evidence" value="ECO:0000318"/>
    <property type="project" value="GO_Central"/>
</dbReference>
<dbReference type="GO" id="GO:0010106">
    <property type="term" value="P:cellular response to iron ion starvation"/>
    <property type="evidence" value="ECO:0000270"/>
    <property type="project" value="MTBBASE"/>
</dbReference>
<dbReference type="GO" id="GO:0000160">
    <property type="term" value="P:phosphorelay signal transduction system"/>
    <property type="evidence" value="ECO:0000314"/>
    <property type="project" value="UniProtKB"/>
</dbReference>
<dbReference type="GO" id="GO:0006355">
    <property type="term" value="P:regulation of DNA-templated transcription"/>
    <property type="evidence" value="ECO:0000318"/>
    <property type="project" value="GO_Central"/>
</dbReference>
<dbReference type="CDD" id="cd17615">
    <property type="entry name" value="REC_OmpR_MtPhoP-like"/>
    <property type="match status" value="1"/>
</dbReference>
<dbReference type="CDD" id="cd00383">
    <property type="entry name" value="trans_reg_C"/>
    <property type="match status" value="1"/>
</dbReference>
<dbReference type="FunFam" id="3.40.50.2300:FF:000001">
    <property type="entry name" value="DNA-binding response regulator PhoB"/>
    <property type="match status" value="1"/>
</dbReference>
<dbReference type="FunFam" id="1.10.10.10:FF:000005">
    <property type="entry name" value="Two-component system response regulator"/>
    <property type="match status" value="1"/>
</dbReference>
<dbReference type="Gene3D" id="3.40.50.2300">
    <property type="match status" value="1"/>
</dbReference>
<dbReference type="Gene3D" id="6.10.250.690">
    <property type="match status" value="1"/>
</dbReference>
<dbReference type="Gene3D" id="1.10.10.10">
    <property type="entry name" value="Winged helix-like DNA-binding domain superfamily/Winged helix DNA-binding domain"/>
    <property type="match status" value="1"/>
</dbReference>
<dbReference type="InterPro" id="IPR011006">
    <property type="entry name" value="CheY-like_superfamily"/>
</dbReference>
<dbReference type="InterPro" id="IPR001867">
    <property type="entry name" value="OmpR/PhoB-type_DNA-bd"/>
</dbReference>
<dbReference type="InterPro" id="IPR001789">
    <property type="entry name" value="Sig_transdc_resp-reg_receiver"/>
</dbReference>
<dbReference type="InterPro" id="IPR039420">
    <property type="entry name" value="WalR-like"/>
</dbReference>
<dbReference type="InterPro" id="IPR036388">
    <property type="entry name" value="WH-like_DNA-bd_sf"/>
</dbReference>
<dbReference type="PANTHER" id="PTHR48111">
    <property type="entry name" value="REGULATOR OF RPOS"/>
    <property type="match status" value="1"/>
</dbReference>
<dbReference type="PANTHER" id="PTHR48111:SF28">
    <property type="entry name" value="TRANSCRIPTIONAL REGULATORY PROTEIN TCRX-RELATED"/>
    <property type="match status" value="1"/>
</dbReference>
<dbReference type="Pfam" id="PF00072">
    <property type="entry name" value="Response_reg"/>
    <property type="match status" value="1"/>
</dbReference>
<dbReference type="Pfam" id="PF00486">
    <property type="entry name" value="Trans_reg_C"/>
    <property type="match status" value="1"/>
</dbReference>
<dbReference type="SMART" id="SM00448">
    <property type="entry name" value="REC"/>
    <property type="match status" value="1"/>
</dbReference>
<dbReference type="SMART" id="SM00862">
    <property type="entry name" value="Trans_reg_C"/>
    <property type="match status" value="1"/>
</dbReference>
<dbReference type="SUPFAM" id="SSF52172">
    <property type="entry name" value="CheY-like"/>
    <property type="match status" value="1"/>
</dbReference>
<dbReference type="PROSITE" id="PS51755">
    <property type="entry name" value="OMPR_PHOB"/>
    <property type="match status" value="1"/>
</dbReference>
<dbReference type="PROSITE" id="PS50110">
    <property type="entry name" value="RESPONSE_REGULATORY"/>
    <property type="match status" value="1"/>
</dbReference>
<protein>
    <recommendedName>
        <fullName>Probable transcriptional regulatory protein TcrX</fullName>
    </recommendedName>
</protein>
<feature type="chain" id="PRO_0000412201" description="Probable transcriptional regulatory protein TcrX">
    <location>
        <begin position="1"/>
        <end position="234"/>
    </location>
</feature>
<feature type="domain" description="Response regulatory" evidence="1">
    <location>
        <begin position="10"/>
        <end position="124"/>
    </location>
</feature>
<feature type="DNA-binding region" description="OmpR/PhoB-type" evidence="2">
    <location>
        <begin position="135"/>
        <end position="232"/>
    </location>
</feature>
<feature type="modified residue" description="4-aspartylphosphate" evidence="1">
    <location>
        <position position="59"/>
    </location>
</feature>
<feature type="sequence conflict" description="In Ref. 2; CAA67749." evidence="5" ref="2">
    <original>L</original>
    <variation>P</variation>
    <location>
        <position position="81"/>
    </location>
</feature>
<name>TCRX_MYCTU</name>
<reference key="1">
    <citation type="journal article" date="1998" name="Nature">
        <title>Deciphering the biology of Mycobacterium tuberculosis from the complete genome sequence.</title>
        <authorList>
            <person name="Cole S.T."/>
            <person name="Brosch R."/>
            <person name="Parkhill J."/>
            <person name="Garnier T."/>
            <person name="Churcher C.M."/>
            <person name="Harris D.E."/>
            <person name="Gordon S.V."/>
            <person name="Eiglmeier K."/>
            <person name="Gas S."/>
            <person name="Barry C.E. III"/>
            <person name="Tekaia F."/>
            <person name="Badcock K."/>
            <person name="Basham D."/>
            <person name="Brown D."/>
            <person name="Chillingworth T."/>
            <person name="Connor R."/>
            <person name="Davies R.M."/>
            <person name="Devlin K."/>
            <person name="Feltwell T."/>
            <person name="Gentles S."/>
            <person name="Hamlin N."/>
            <person name="Holroyd S."/>
            <person name="Hornsby T."/>
            <person name="Jagels K."/>
            <person name="Krogh A."/>
            <person name="McLean J."/>
            <person name="Moule S."/>
            <person name="Murphy L.D."/>
            <person name="Oliver S."/>
            <person name="Osborne J."/>
            <person name="Quail M.A."/>
            <person name="Rajandream M.A."/>
            <person name="Rogers J."/>
            <person name="Rutter S."/>
            <person name="Seeger K."/>
            <person name="Skelton S."/>
            <person name="Squares S."/>
            <person name="Squares R."/>
            <person name="Sulston J.E."/>
            <person name="Taylor K."/>
            <person name="Whitehead S."/>
            <person name="Barrell B.G."/>
        </authorList>
    </citation>
    <scope>NUCLEOTIDE SEQUENCE [LARGE SCALE GENOMIC DNA]</scope>
    <source>
        <strain>ATCC 25618 / H37Rv</strain>
    </source>
</reference>
<reference key="2">
    <citation type="submission" date="1996-07" db="EMBL/GenBank/DDBJ databases">
        <authorList>
            <person name="Casali N."/>
            <person name="Wren B.W."/>
            <person name="Stoker N.G."/>
        </authorList>
    </citation>
    <scope>NUCLEOTIDE SEQUENCE [GENOMIC DNA] OF 16-103</scope>
    <source>
        <strain>ATCC 25618 / H37Rv</strain>
    </source>
</reference>
<reference key="3">
    <citation type="journal article" date="2003" name="Infect. Immun.">
        <title>Deletion of two-component regulatory systems increases the virulence of Mycobacterium tuberculosis.</title>
        <authorList>
            <person name="Parish T."/>
            <person name="Smith D.A."/>
            <person name="Kendall S."/>
            <person name="Casali N."/>
            <person name="Bancroft G.J."/>
            <person name="Stoker N.G."/>
        </authorList>
    </citation>
    <scope>FUNCTION</scope>
    <scope>DISRUPTION PHENOTYPE</scope>
    <scope>GENE NAME</scope>
    <source>
        <strain>ATCC 25618 / H37Rv</strain>
    </source>
</reference>
<reference key="4">
    <citation type="journal article" date="2010" name="Biochimie">
        <title>Interaction analysis of TcrX/Y two component system from Mycobacterium tuberculosis.</title>
        <authorList>
            <person name="Bhattacharya M."/>
            <person name="Biswas A."/>
            <person name="Das A.K."/>
        </authorList>
    </citation>
    <scope>FUNCTION</scope>
    <scope>PHOSPHORYLATION</scope>
    <source>
        <strain>ATCC 25618 / H37Rv</strain>
    </source>
</reference>
<reference key="5">
    <citation type="journal article" date="2011" name="Mol. Cell. Proteomics">
        <title>Proteogenomic analysis of Mycobacterium tuberculosis by high resolution mass spectrometry.</title>
        <authorList>
            <person name="Kelkar D.S."/>
            <person name="Kumar D."/>
            <person name="Kumar P."/>
            <person name="Balakrishnan L."/>
            <person name="Muthusamy B."/>
            <person name="Yadav A.K."/>
            <person name="Shrivastava P."/>
            <person name="Marimuthu A."/>
            <person name="Anand S."/>
            <person name="Sundaram H."/>
            <person name="Kingsbury R."/>
            <person name="Harsha H.C."/>
            <person name="Nair B."/>
            <person name="Prasad T.S."/>
            <person name="Chauhan D.S."/>
            <person name="Katoch K."/>
            <person name="Katoch V.M."/>
            <person name="Kumar P."/>
            <person name="Chaerkady R."/>
            <person name="Ramachandran S."/>
            <person name="Dash D."/>
            <person name="Pandey A."/>
        </authorList>
    </citation>
    <scope>IDENTIFICATION BY MASS SPECTROMETRY [LARGE SCALE ANALYSIS]</scope>
    <source>
        <strain>ATCC 25618 / H37Rv</strain>
    </source>
</reference>
<comment type="function">
    <text evidence="3 4">Member of the two-component regulatory system TcrY/TcrX.</text>
</comment>
<comment type="subcellular location">
    <subcellularLocation>
        <location evidence="5">Cytoplasm</location>
    </subcellularLocation>
</comment>
<comment type="PTM">
    <text evidence="4">Phosphorylated by TcrY.</text>
</comment>
<comment type="disruption phenotype">
    <text evidence="3">Cells lacking TcrX and TcrY show an increase in virulence in mouse model of infection, with significantly shorter survival times.</text>
</comment>